<name>NUP42_HUMAN</name>
<reference key="1">
    <citation type="journal article" date="1997" name="Eur. J. Hum. Genet.">
        <title>Refined mapping of a gene for autosomal dominant progressive sensorineural hearing loss (DFNA5) to a 2-cM region, and exclusion of a candidate gene that is expressed in the cochlea.</title>
        <authorList>
            <person name="Van Laer L."/>
            <person name="Van Camp G."/>
            <person name="van Zuylen D."/>
            <person name="Green E.D."/>
            <person name="Verstreken M."/>
            <person name="Schatteman I."/>
            <person name="Van de Heyning P."/>
            <person name="Balemans W."/>
            <person name="Coucke P."/>
            <person name="Greinwald J.H."/>
            <person name="Smith R.J.H."/>
            <person name="Huizing E."/>
            <person name="Willems P."/>
        </authorList>
    </citation>
    <scope>NUCLEOTIDE SEQUENCE [MRNA] (ISOFORM 1)</scope>
</reference>
<reference key="2">
    <citation type="submission" date="2003-05" db="EMBL/GenBank/DDBJ databases">
        <title>Cloning of human full-length CDSs in BD Creator(TM) system donor vector.</title>
        <authorList>
            <person name="Kalnine N."/>
            <person name="Chen X."/>
            <person name="Rolfs A."/>
            <person name="Halleck A."/>
            <person name="Hines L."/>
            <person name="Eisenstein S."/>
            <person name="Koundinya M."/>
            <person name="Raphael J."/>
            <person name="Moreira D."/>
            <person name="Kelley T."/>
            <person name="LaBaer J."/>
            <person name="Lin Y."/>
            <person name="Phelan M."/>
            <person name="Farmer A."/>
        </authorList>
    </citation>
    <scope>NUCLEOTIDE SEQUENCE [LARGE SCALE MRNA] (ISOFORM 2)</scope>
</reference>
<reference key="3">
    <citation type="journal article" date="2004" name="Nat. Genet.">
        <title>Complete sequencing and characterization of 21,243 full-length human cDNAs.</title>
        <authorList>
            <person name="Ota T."/>
            <person name="Suzuki Y."/>
            <person name="Nishikawa T."/>
            <person name="Otsuki T."/>
            <person name="Sugiyama T."/>
            <person name="Irie R."/>
            <person name="Wakamatsu A."/>
            <person name="Hayashi K."/>
            <person name="Sato H."/>
            <person name="Nagai K."/>
            <person name="Kimura K."/>
            <person name="Makita H."/>
            <person name="Sekine M."/>
            <person name="Obayashi M."/>
            <person name="Nishi T."/>
            <person name="Shibahara T."/>
            <person name="Tanaka T."/>
            <person name="Ishii S."/>
            <person name="Yamamoto J."/>
            <person name="Saito K."/>
            <person name="Kawai Y."/>
            <person name="Isono Y."/>
            <person name="Nakamura Y."/>
            <person name="Nagahari K."/>
            <person name="Murakami K."/>
            <person name="Yasuda T."/>
            <person name="Iwayanagi T."/>
            <person name="Wagatsuma M."/>
            <person name="Shiratori A."/>
            <person name="Sudo H."/>
            <person name="Hosoiri T."/>
            <person name="Kaku Y."/>
            <person name="Kodaira H."/>
            <person name="Kondo H."/>
            <person name="Sugawara M."/>
            <person name="Takahashi M."/>
            <person name="Kanda K."/>
            <person name="Yokoi T."/>
            <person name="Furuya T."/>
            <person name="Kikkawa E."/>
            <person name="Omura Y."/>
            <person name="Abe K."/>
            <person name="Kamihara K."/>
            <person name="Katsuta N."/>
            <person name="Sato K."/>
            <person name="Tanikawa M."/>
            <person name="Yamazaki M."/>
            <person name="Ninomiya K."/>
            <person name="Ishibashi T."/>
            <person name="Yamashita H."/>
            <person name="Murakawa K."/>
            <person name="Fujimori K."/>
            <person name="Tanai H."/>
            <person name="Kimata M."/>
            <person name="Watanabe M."/>
            <person name="Hiraoka S."/>
            <person name="Chiba Y."/>
            <person name="Ishida S."/>
            <person name="Ono Y."/>
            <person name="Takiguchi S."/>
            <person name="Watanabe S."/>
            <person name="Yosida M."/>
            <person name="Hotuta T."/>
            <person name="Kusano J."/>
            <person name="Kanehori K."/>
            <person name="Takahashi-Fujii A."/>
            <person name="Hara H."/>
            <person name="Tanase T.-O."/>
            <person name="Nomura Y."/>
            <person name="Togiya S."/>
            <person name="Komai F."/>
            <person name="Hara R."/>
            <person name="Takeuchi K."/>
            <person name="Arita M."/>
            <person name="Imose N."/>
            <person name="Musashino K."/>
            <person name="Yuuki H."/>
            <person name="Oshima A."/>
            <person name="Sasaki N."/>
            <person name="Aotsuka S."/>
            <person name="Yoshikawa Y."/>
            <person name="Matsunawa H."/>
            <person name="Ichihara T."/>
            <person name="Shiohata N."/>
            <person name="Sano S."/>
            <person name="Moriya S."/>
            <person name="Momiyama H."/>
            <person name="Satoh N."/>
            <person name="Takami S."/>
            <person name="Terashima Y."/>
            <person name="Suzuki O."/>
            <person name="Nakagawa S."/>
            <person name="Senoh A."/>
            <person name="Mizoguchi H."/>
            <person name="Goto Y."/>
            <person name="Shimizu F."/>
            <person name="Wakebe H."/>
            <person name="Hishigaki H."/>
            <person name="Watanabe T."/>
            <person name="Sugiyama A."/>
            <person name="Takemoto M."/>
            <person name="Kawakami B."/>
            <person name="Yamazaki M."/>
            <person name="Watanabe K."/>
            <person name="Kumagai A."/>
            <person name="Itakura S."/>
            <person name="Fukuzumi Y."/>
            <person name="Fujimori Y."/>
            <person name="Komiyama M."/>
            <person name="Tashiro H."/>
            <person name="Tanigami A."/>
            <person name="Fujiwara T."/>
            <person name="Ono T."/>
            <person name="Yamada K."/>
            <person name="Fujii Y."/>
            <person name="Ozaki K."/>
            <person name="Hirao M."/>
            <person name="Ohmori Y."/>
            <person name="Kawabata A."/>
            <person name="Hikiji T."/>
            <person name="Kobatake N."/>
            <person name="Inagaki H."/>
            <person name="Ikema Y."/>
            <person name="Okamoto S."/>
            <person name="Okitani R."/>
            <person name="Kawakami T."/>
            <person name="Noguchi S."/>
            <person name="Itoh T."/>
            <person name="Shigeta K."/>
            <person name="Senba T."/>
            <person name="Matsumura K."/>
            <person name="Nakajima Y."/>
            <person name="Mizuno T."/>
            <person name="Morinaga M."/>
            <person name="Sasaki M."/>
            <person name="Togashi T."/>
            <person name="Oyama M."/>
            <person name="Hata H."/>
            <person name="Watanabe M."/>
            <person name="Komatsu T."/>
            <person name="Mizushima-Sugano J."/>
            <person name="Satoh T."/>
            <person name="Shirai Y."/>
            <person name="Takahashi Y."/>
            <person name="Nakagawa K."/>
            <person name="Okumura K."/>
            <person name="Nagase T."/>
            <person name="Nomura N."/>
            <person name="Kikuchi H."/>
            <person name="Masuho Y."/>
            <person name="Yamashita R."/>
            <person name="Nakai K."/>
            <person name="Yada T."/>
            <person name="Nakamura Y."/>
            <person name="Ohara O."/>
            <person name="Isogai T."/>
            <person name="Sugano S."/>
        </authorList>
    </citation>
    <scope>NUCLEOTIDE SEQUENCE [LARGE SCALE MRNA] (ISOFORM 3)</scope>
</reference>
<reference key="4">
    <citation type="journal article" date="2003" name="Science">
        <title>Human chromosome 7: DNA sequence and biology.</title>
        <authorList>
            <person name="Scherer S.W."/>
            <person name="Cheung J."/>
            <person name="MacDonald J.R."/>
            <person name="Osborne L.R."/>
            <person name="Nakabayashi K."/>
            <person name="Herbrick J.-A."/>
            <person name="Carson A.R."/>
            <person name="Parker-Katiraee L."/>
            <person name="Skaug J."/>
            <person name="Khaja R."/>
            <person name="Zhang J."/>
            <person name="Hudek A.K."/>
            <person name="Li M."/>
            <person name="Haddad M."/>
            <person name="Duggan G.E."/>
            <person name="Fernandez B.A."/>
            <person name="Kanematsu E."/>
            <person name="Gentles S."/>
            <person name="Christopoulos C.C."/>
            <person name="Choufani S."/>
            <person name="Kwasnicka D."/>
            <person name="Zheng X.H."/>
            <person name="Lai Z."/>
            <person name="Nusskern D.R."/>
            <person name="Zhang Q."/>
            <person name="Gu Z."/>
            <person name="Lu F."/>
            <person name="Zeesman S."/>
            <person name="Nowaczyk M.J."/>
            <person name="Teshima I."/>
            <person name="Chitayat D."/>
            <person name="Shuman C."/>
            <person name="Weksberg R."/>
            <person name="Zackai E.H."/>
            <person name="Grebe T.A."/>
            <person name="Cox S.R."/>
            <person name="Kirkpatrick S.J."/>
            <person name="Rahman N."/>
            <person name="Friedman J.M."/>
            <person name="Heng H.H.Q."/>
            <person name="Pelicci P.G."/>
            <person name="Lo-Coco F."/>
            <person name="Belloni E."/>
            <person name="Shaffer L.G."/>
            <person name="Pober B."/>
            <person name="Morton C.C."/>
            <person name="Gusella J.F."/>
            <person name="Bruns G.A.P."/>
            <person name="Korf B.R."/>
            <person name="Quade B.J."/>
            <person name="Ligon A.H."/>
            <person name="Ferguson H."/>
            <person name="Higgins A.W."/>
            <person name="Leach N.T."/>
            <person name="Herrick S.R."/>
            <person name="Lemyre E."/>
            <person name="Farra C.G."/>
            <person name="Kim H.-G."/>
            <person name="Summers A.M."/>
            <person name="Gripp K.W."/>
            <person name="Roberts W."/>
            <person name="Szatmari P."/>
            <person name="Winsor E.J.T."/>
            <person name="Grzeschik K.-H."/>
            <person name="Teebi A."/>
            <person name="Minassian B.A."/>
            <person name="Kere J."/>
            <person name="Armengol L."/>
            <person name="Pujana M.A."/>
            <person name="Estivill X."/>
            <person name="Wilson M.D."/>
            <person name="Koop B.F."/>
            <person name="Tosi S."/>
            <person name="Moore G.E."/>
            <person name="Boright A.P."/>
            <person name="Zlotorynski E."/>
            <person name="Kerem B."/>
            <person name="Kroisel P.M."/>
            <person name="Petek E."/>
            <person name="Oscier D.G."/>
            <person name="Mould S.J."/>
            <person name="Doehner H."/>
            <person name="Doehner K."/>
            <person name="Rommens J.M."/>
            <person name="Vincent J.B."/>
            <person name="Venter J.C."/>
            <person name="Li P.W."/>
            <person name="Mural R.J."/>
            <person name="Adams M.D."/>
            <person name="Tsui L.-C."/>
        </authorList>
    </citation>
    <scope>NUCLEOTIDE SEQUENCE [LARGE SCALE GENOMIC DNA]</scope>
</reference>
<reference key="5">
    <citation type="journal article" date="2004" name="Genome Res.">
        <title>The status, quality, and expansion of the NIH full-length cDNA project: the Mammalian Gene Collection (MGC).</title>
        <authorList>
            <consortium name="The MGC Project Team"/>
        </authorList>
    </citation>
    <scope>NUCLEOTIDE SEQUENCE [LARGE SCALE MRNA] (ISOFORMS 2 AND 3)</scope>
    <source>
        <tissue>Testis</tissue>
        <tissue>Urinary bladder</tissue>
    </source>
</reference>
<reference key="6">
    <citation type="journal article" date="1999" name="EMBO J.">
        <title>The Mex67p-mediated nuclear mRNA export pathway is conserved from yeast to human.</title>
        <authorList>
            <person name="Katahira J."/>
            <person name="Straesser K."/>
            <person name="Podtelejnikov A."/>
            <person name="Mann M."/>
            <person name="Jung J.U."/>
            <person name="Hurt E."/>
        </authorList>
    </citation>
    <scope>INTERACTION WITH NXF1</scope>
</reference>
<reference key="7">
    <citation type="journal article" date="1999" name="EMBO J.">
        <title>The RNA export factor Gle1p is located on the cytoplasmic fibrils of the NPC and physically interacts with the FG-nucleoporin Rip1p, the DEAD-box protein Rat8p/Dbp5p and a new protein Ymr255p.</title>
        <authorList>
            <person name="Strahm Y."/>
            <person name="Fahrenkrog B."/>
            <person name="Zenklusen D."/>
            <person name="Rychner E."/>
            <person name="Kantor J."/>
            <person name="Rosbach M."/>
            <person name="Stutz F."/>
        </authorList>
    </citation>
    <scope>FUNCTION</scope>
</reference>
<reference key="8">
    <citation type="journal article" date="1999" name="J. Biol. Chem.">
        <title>A new nucleoporin-like protein interacts with both HIV-1 Rev nuclear export signal and CRM-1.</title>
        <authorList>
            <person name="Farjot G."/>
            <person name="Sergeant A."/>
            <person name="Mikaelian I."/>
        </authorList>
    </citation>
    <scope>SUBCELLULAR LOCATION</scope>
    <scope>GLYCOSYLATION</scope>
    <scope>TISSUE SPECIFICITY</scope>
    <scope>INTERACTION WITH XPO1 AND HIV-1 VIRUS REV PROTEIN</scope>
</reference>
<reference key="9">
    <citation type="journal article" date="2002" name="J. Biol. Chem.">
        <title>Docking of HIV-1 Vpr to the nuclear envelope is mediated by the interaction with the nucleoporin hCG1.</title>
        <authorList>
            <person name="Le Rouzic E."/>
            <person name="Mousnier A."/>
            <person name="Rustum C."/>
            <person name="Stutz F."/>
            <person name="Hallberg E."/>
            <person name="Dargemont C."/>
            <person name="Benichou S."/>
        </authorList>
    </citation>
    <scope>SUBCELLULAR LOCATION</scope>
    <scope>INTERACTION WITH HIV-1 VIRUS VPR PROTEIN</scope>
    <scope>FUNCTION (MICROBIAL INFECTION)</scope>
</reference>
<reference key="10">
    <citation type="journal article" date="2005" name="Mol. Biol. Cell">
        <title>Interaction between the shuttling mRNA export factor Gle1 and the nucleoporin hCG1: a conserved mechanism in the export of Hsp70 mRNA.</title>
        <authorList>
            <person name="Kendirgi F."/>
            <person name="Rexer D.J."/>
            <person name="Alcazar-Roman A.R."/>
            <person name="Onishko H.M."/>
            <person name="Wente S.R."/>
        </authorList>
    </citation>
    <scope>FUNCTION</scope>
    <scope>SUBCELLULAR LOCATION</scope>
    <scope>INTERACTION WITH GLE1</scope>
</reference>
<reference key="11">
    <citation type="journal article" date="2008" name="Proc. Natl. Acad. Sci. U.S.A.">
        <title>A quantitative atlas of mitotic phosphorylation.</title>
        <authorList>
            <person name="Dephoure N."/>
            <person name="Zhou C."/>
            <person name="Villen J."/>
            <person name="Beausoleil S.A."/>
            <person name="Bakalarski C.E."/>
            <person name="Elledge S.J."/>
            <person name="Gygi S.P."/>
        </authorList>
    </citation>
    <scope>IDENTIFICATION BY MASS SPECTROMETRY [LARGE SCALE ANALYSIS]</scope>
    <source>
        <tissue>Cervix carcinoma</tissue>
    </source>
</reference>
<reference key="12">
    <citation type="journal article" date="2010" name="Sci. Signal.">
        <title>Quantitative phosphoproteomics reveals widespread full phosphorylation site occupancy during mitosis.</title>
        <authorList>
            <person name="Olsen J.V."/>
            <person name="Vermeulen M."/>
            <person name="Santamaria A."/>
            <person name="Kumar C."/>
            <person name="Miller M.L."/>
            <person name="Jensen L.J."/>
            <person name="Gnad F."/>
            <person name="Cox J."/>
            <person name="Jensen T.S."/>
            <person name="Nigg E.A."/>
            <person name="Brunak S."/>
            <person name="Mann M."/>
        </authorList>
    </citation>
    <scope>PHOSPHORYLATION [LARGE SCALE ANALYSIS] AT SER-106</scope>
    <scope>IDENTIFICATION BY MASS SPECTROMETRY [LARGE SCALE ANALYSIS]</scope>
    <source>
        <tissue>Cervix carcinoma</tissue>
    </source>
</reference>
<reference key="13">
    <citation type="journal article" date="2013" name="J. Proteome Res.">
        <title>Toward a comprehensive characterization of a human cancer cell phosphoproteome.</title>
        <authorList>
            <person name="Zhou H."/>
            <person name="Di Palma S."/>
            <person name="Preisinger C."/>
            <person name="Peng M."/>
            <person name="Polat A.N."/>
            <person name="Heck A.J."/>
            <person name="Mohammed S."/>
        </authorList>
    </citation>
    <scope>PHOSPHORYLATION [LARGE SCALE ANALYSIS] AT SER-106</scope>
    <scope>IDENTIFICATION BY MASS SPECTROMETRY [LARGE SCALE ANALYSIS]</scope>
    <source>
        <tissue>Cervix carcinoma</tissue>
        <tissue>Erythroleukemia</tissue>
    </source>
</reference>
<proteinExistence type="evidence at protein level"/>
<gene>
    <name evidence="13" type="primary">NUP42</name>
    <name type="synonym">CG1</name>
    <name type="synonym">NUPL2</name>
</gene>
<protein>
    <recommendedName>
        <fullName evidence="12">Nucleoporin NUP42</fullName>
    </recommendedName>
    <alternativeName>
        <fullName>NLP-1</fullName>
    </alternativeName>
    <alternativeName>
        <fullName>NUP42 homolog</fullName>
    </alternativeName>
    <alternativeName>
        <fullName>Nucleoporin hCG1</fullName>
    </alternativeName>
    <alternativeName>
        <fullName evidence="13">Nucleoporin-42</fullName>
    </alternativeName>
    <alternativeName>
        <fullName>Nucleoporin-like protein 2</fullName>
    </alternativeName>
</protein>
<feature type="chain" id="PRO_0000204895" description="Nucleoporin NUP42">
    <location>
        <begin position="1"/>
        <end position="423"/>
    </location>
</feature>
<feature type="repeat" description="FG 1">
    <location>
        <begin position="14"/>
        <end position="15"/>
    </location>
</feature>
<feature type="repeat" description="FG 2">
    <location>
        <begin position="95"/>
        <end position="96"/>
    </location>
</feature>
<feature type="repeat" description="FG 3">
    <location>
        <begin position="218"/>
        <end position="219"/>
    </location>
</feature>
<feature type="repeat" description="FG 4">
    <location>
        <begin position="220"/>
        <end position="221"/>
    </location>
</feature>
<feature type="repeat" description="FG 5">
    <location>
        <begin position="265"/>
        <end position="266"/>
    </location>
</feature>
<feature type="repeat" description="FG 6">
    <location>
        <begin position="271"/>
        <end position="272"/>
    </location>
</feature>
<feature type="repeat" description="FG 7">
    <location>
        <begin position="288"/>
        <end position="289"/>
    </location>
</feature>
<feature type="repeat" description="FG 8">
    <location>
        <begin position="290"/>
        <end position="291"/>
    </location>
</feature>
<feature type="repeat" description="FG 9">
    <location>
        <begin position="311"/>
        <end position="312"/>
    </location>
</feature>
<feature type="repeat" description="FG 10">
    <location>
        <begin position="336"/>
        <end position="337"/>
    </location>
</feature>
<feature type="repeat" description="FG 11">
    <location>
        <begin position="345"/>
        <end position="346"/>
    </location>
</feature>
<feature type="repeat" description="FG 12">
    <location>
        <begin position="364"/>
        <end position="365"/>
    </location>
</feature>
<feature type="zinc finger region" description="C3H1-type" evidence="2">
    <location>
        <begin position="1"/>
        <end position="25"/>
    </location>
</feature>
<feature type="region of interest" description="Disordered" evidence="3">
    <location>
        <begin position="24"/>
        <end position="85"/>
    </location>
</feature>
<feature type="region of interest" description="Interaction with HIV-1 Vpr">
    <location>
        <begin position="94"/>
        <end position="170"/>
    </location>
</feature>
<feature type="region of interest" description="Interaction with GLE1" evidence="8">
    <location>
        <begin position="365"/>
        <end position="423"/>
    </location>
</feature>
<feature type="compositionally biased region" description="Polar residues" evidence="3">
    <location>
        <begin position="40"/>
        <end position="69"/>
    </location>
</feature>
<feature type="modified residue" description="Phosphoserine" evidence="14 15">
    <location>
        <position position="106"/>
    </location>
</feature>
<feature type="splice variant" id="VSP_016480" description="In isoform 3." evidence="9 10">
    <location>
        <begin position="1"/>
        <end position="228"/>
    </location>
</feature>
<feature type="splice variant" id="VSP_016481" description="In isoform 2." evidence="10 11">
    <original>LSDVKDGVNQAAPAFGFGSSQ</original>
    <variation>KCLWKIYTHLSPKIYGPDCAL</variation>
    <location>
        <begin position="204"/>
        <end position="224"/>
    </location>
</feature>
<feature type="splice variant" id="VSP_016482" description="In isoform 2." evidence="10 11">
    <location>
        <begin position="225"/>
        <end position="423"/>
    </location>
</feature>
<feature type="sequence variant" id="VAR_050572" description="In dbSNP:rs13243961.">
    <original>D</original>
    <variation>N</variation>
    <location>
        <position position="391"/>
    </location>
</feature>
<feature type="sequence variant" id="VAR_050573" description="In dbSNP:rs34902971.">
    <original>K</original>
    <variation>N</variation>
    <location>
        <position position="392"/>
    </location>
</feature>
<feature type="helix" evidence="16">
    <location>
        <begin position="395"/>
        <end position="402"/>
    </location>
</feature>
<feature type="strand" evidence="16">
    <location>
        <begin position="403"/>
        <end position="405"/>
    </location>
</feature>
<feature type="helix" evidence="16">
    <location>
        <begin position="418"/>
        <end position="420"/>
    </location>
</feature>
<organism>
    <name type="scientific">Homo sapiens</name>
    <name type="common">Human</name>
    <dbReference type="NCBI Taxonomy" id="9606"/>
    <lineage>
        <taxon>Eukaryota</taxon>
        <taxon>Metazoa</taxon>
        <taxon>Chordata</taxon>
        <taxon>Craniata</taxon>
        <taxon>Vertebrata</taxon>
        <taxon>Euteleostomi</taxon>
        <taxon>Mammalia</taxon>
        <taxon>Eutheria</taxon>
        <taxon>Euarchontoglires</taxon>
        <taxon>Primates</taxon>
        <taxon>Haplorrhini</taxon>
        <taxon>Catarrhini</taxon>
        <taxon>Hominidae</taxon>
        <taxon>Homo</taxon>
    </lineage>
</organism>
<accession>O15504</accession>
<accession>A4D143</accession>
<accession>B4DP42</accession>
<accession>Q49AE7</accession>
<accession>Q9BS49</accession>
<dbReference type="EMBL" id="U97198">
    <property type="protein sequence ID" value="AAC33794.1"/>
    <property type="molecule type" value="mRNA"/>
</dbReference>
<dbReference type="EMBL" id="BT007409">
    <property type="protein sequence ID" value="AAP36077.1"/>
    <property type="molecule type" value="mRNA"/>
</dbReference>
<dbReference type="EMBL" id="AK298183">
    <property type="protein sequence ID" value="BAG60454.1"/>
    <property type="molecule type" value="mRNA"/>
</dbReference>
<dbReference type="EMBL" id="CH236948">
    <property type="protein sequence ID" value="EAL24260.1"/>
    <property type="molecule type" value="Genomic_DNA"/>
</dbReference>
<dbReference type="EMBL" id="BC005327">
    <property type="protein sequence ID" value="AAH05327.1"/>
    <property type="molecule type" value="mRNA"/>
</dbReference>
<dbReference type="EMBL" id="BC039333">
    <property type="protein sequence ID" value="AAH39333.1"/>
    <property type="molecule type" value="mRNA"/>
</dbReference>
<dbReference type="CCDS" id="CCDS5379.1">
    <molecule id="O15504-1"/>
</dbReference>
<dbReference type="RefSeq" id="NP_031368.1">
    <molecule id="O15504-1"/>
    <property type="nucleotide sequence ID" value="NM_007342.3"/>
</dbReference>
<dbReference type="PDB" id="6B4F">
    <property type="method" value="X-ray"/>
    <property type="resolution" value="2.81 A"/>
    <property type="chains" value="C/D=381-423"/>
</dbReference>
<dbReference type="PDB" id="6B4I">
    <property type="method" value="X-ray"/>
    <property type="resolution" value="3.62 A"/>
    <property type="chains" value="C/D=381-423"/>
</dbReference>
<dbReference type="PDB" id="6B4J">
    <property type="method" value="X-ray"/>
    <property type="resolution" value="3.40 A"/>
    <property type="chains" value="C/D=376-422"/>
</dbReference>
<dbReference type="PDBsum" id="6B4F"/>
<dbReference type="PDBsum" id="6B4I"/>
<dbReference type="PDBsum" id="6B4J"/>
<dbReference type="SMR" id="O15504"/>
<dbReference type="BioGRID" id="116278">
    <property type="interactions" value="166"/>
</dbReference>
<dbReference type="ComplexPortal" id="CPX-873">
    <property type="entry name" value="Nuclear pore complex"/>
</dbReference>
<dbReference type="CORUM" id="O15504"/>
<dbReference type="FunCoup" id="O15504">
    <property type="interactions" value="3803"/>
</dbReference>
<dbReference type="IntAct" id="O15504">
    <property type="interactions" value="114"/>
</dbReference>
<dbReference type="MINT" id="O15504"/>
<dbReference type="STRING" id="9606.ENSP00000258742"/>
<dbReference type="TCDB" id="1.I.1.1.3">
    <property type="family name" value="the nuclear pore complex (npc) family"/>
</dbReference>
<dbReference type="GlyCosmos" id="O15504">
    <property type="glycosylation" value="3 sites, 1 glycan"/>
</dbReference>
<dbReference type="GlyGen" id="O15504">
    <property type="glycosylation" value="4 sites, 1 N-linked glycan (1 site), 1 O-linked glycan (3 sites)"/>
</dbReference>
<dbReference type="iPTMnet" id="O15504"/>
<dbReference type="PhosphoSitePlus" id="O15504"/>
<dbReference type="SwissPalm" id="O15504"/>
<dbReference type="BioMuta" id="NUPL2"/>
<dbReference type="jPOST" id="O15504"/>
<dbReference type="MassIVE" id="O15504"/>
<dbReference type="PaxDb" id="9606-ENSP00000258742"/>
<dbReference type="PeptideAtlas" id="O15504"/>
<dbReference type="ProteomicsDB" id="48700">
    <molecule id="O15504-1"/>
</dbReference>
<dbReference type="ProteomicsDB" id="48701">
    <molecule id="O15504-2"/>
</dbReference>
<dbReference type="ProteomicsDB" id="48702">
    <molecule id="O15504-3"/>
</dbReference>
<dbReference type="Pumba" id="O15504"/>
<dbReference type="Antibodypedia" id="44074">
    <property type="antibodies" value="119 antibodies from 21 providers"/>
</dbReference>
<dbReference type="DNASU" id="11097"/>
<dbReference type="Ensembl" id="ENST00000258742.10">
    <molecule id="O15504-1"/>
    <property type="protein sequence ID" value="ENSP00000258742.5"/>
    <property type="gene ID" value="ENSG00000136243.18"/>
</dbReference>
<dbReference type="Ensembl" id="ENST00000438012.5">
    <molecule id="O15504-2"/>
    <property type="protein sequence ID" value="ENSP00000415511.1"/>
    <property type="gene ID" value="ENSG00000136243.18"/>
</dbReference>
<dbReference type="GeneID" id="11097"/>
<dbReference type="KEGG" id="hsa:11097"/>
<dbReference type="MANE-Select" id="ENST00000258742.10">
    <property type="protein sequence ID" value="ENSP00000258742.5"/>
    <property type="RefSeq nucleotide sequence ID" value="NM_007342.3"/>
    <property type="RefSeq protein sequence ID" value="NP_031368.1"/>
</dbReference>
<dbReference type="UCSC" id="uc003svu.4">
    <molecule id="O15504-1"/>
    <property type="organism name" value="human"/>
</dbReference>
<dbReference type="AGR" id="HGNC:17010"/>
<dbReference type="CTD" id="11097"/>
<dbReference type="DisGeNET" id="11097"/>
<dbReference type="GeneCards" id="NUP42"/>
<dbReference type="HGNC" id="HGNC:17010">
    <property type="gene designation" value="NUP42"/>
</dbReference>
<dbReference type="HPA" id="ENSG00000136243">
    <property type="expression patterns" value="Low tissue specificity"/>
</dbReference>
<dbReference type="MIM" id="619998">
    <property type="type" value="gene"/>
</dbReference>
<dbReference type="neXtProt" id="NX_O15504"/>
<dbReference type="OpenTargets" id="ENSG00000136243"/>
<dbReference type="PharmGKB" id="PA134990469"/>
<dbReference type="VEuPathDB" id="HostDB:ENSG00000136243"/>
<dbReference type="eggNOG" id="ENOG502R2TD">
    <property type="taxonomic scope" value="Eukaryota"/>
</dbReference>
<dbReference type="GeneTree" id="ENSGT00390000000118"/>
<dbReference type="HOGENOM" id="CLU_048441_0_0_1"/>
<dbReference type="InParanoid" id="O15504"/>
<dbReference type="OMA" id="CHNEHFD"/>
<dbReference type="OrthoDB" id="20729at2759"/>
<dbReference type="PAN-GO" id="O15504">
    <property type="GO annotations" value="2 GO annotations based on evolutionary models"/>
</dbReference>
<dbReference type="PhylomeDB" id="O15504"/>
<dbReference type="TreeFam" id="TF106503"/>
<dbReference type="PathwayCommons" id="O15504"/>
<dbReference type="Reactome" id="R-HSA-1169408">
    <property type="pathway name" value="ISG15 antiviral mechanism"/>
</dbReference>
<dbReference type="Reactome" id="R-HSA-159227">
    <property type="pathway name" value="Transport of the SLBP independent Mature mRNA"/>
</dbReference>
<dbReference type="Reactome" id="R-HSA-159230">
    <property type="pathway name" value="Transport of the SLBP Dependant Mature mRNA"/>
</dbReference>
<dbReference type="Reactome" id="R-HSA-159231">
    <property type="pathway name" value="Transport of Mature mRNA Derived from an Intronless Transcript"/>
</dbReference>
<dbReference type="Reactome" id="R-HSA-159236">
    <property type="pathway name" value="Transport of Mature mRNA derived from an Intron-Containing Transcript"/>
</dbReference>
<dbReference type="Reactome" id="R-HSA-165054">
    <property type="pathway name" value="Rev-mediated nuclear export of HIV RNA"/>
</dbReference>
<dbReference type="Reactome" id="R-HSA-168271">
    <property type="pathway name" value="Transport of Ribonucleoproteins into the Host Nucleus"/>
</dbReference>
<dbReference type="Reactome" id="R-HSA-168276">
    <property type="pathway name" value="NS1 Mediated Effects on Host Pathways"/>
</dbReference>
<dbReference type="Reactome" id="R-HSA-168325">
    <property type="pathway name" value="Viral Messenger RNA Synthesis"/>
</dbReference>
<dbReference type="Reactome" id="R-HSA-168333">
    <property type="pathway name" value="NEP/NS2 Interacts with the Cellular Export Machinery"/>
</dbReference>
<dbReference type="Reactome" id="R-HSA-170822">
    <property type="pathway name" value="Regulation of Glucokinase by Glucokinase Regulatory Protein"/>
</dbReference>
<dbReference type="Reactome" id="R-HSA-180746">
    <property type="pathway name" value="Nuclear import of Rev protein"/>
</dbReference>
<dbReference type="Reactome" id="R-HSA-180910">
    <property type="pathway name" value="Vpr-mediated nuclear import of PICs"/>
</dbReference>
<dbReference type="Reactome" id="R-HSA-191859">
    <property type="pathway name" value="snRNP Assembly"/>
</dbReference>
<dbReference type="Reactome" id="R-HSA-3108214">
    <property type="pathway name" value="SUMOylation of DNA damage response and repair proteins"/>
</dbReference>
<dbReference type="Reactome" id="R-HSA-3232142">
    <property type="pathway name" value="SUMOylation of ubiquitinylation proteins"/>
</dbReference>
<dbReference type="Reactome" id="R-HSA-3301854">
    <property type="pathway name" value="Nuclear Pore Complex (NPC) Disassembly"/>
</dbReference>
<dbReference type="Reactome" id="R-HSA-3371453">
    <property type="pathway name" value="Regulation of HSF1-mediated heat shock response"/>
</dbReference>
<dbReference type="Reactome" id="R-HSA-4085377">
    <property type="pathway name" value="SUMOylation of SUMOylation proteins"/>
</dbReference>
<dbReference type="Reactome" id="R-HSA-4551638">
    <property type="pathway name" value="SUMOylation of chromatin organization proteins"/>
</dbReference>
<dbReference type="Reactome" id="R-HSA-4570464">
    <property type="pathway name" value="SUMOylation of RNA binding proteins"/>
</dbReference>
<dbReference type="Reactome" id="R-HSA-4615885">
    <property type="pathway name" value="SUMOylation of DNA replication proteins"/>
</dbReference>
<dbReference type="Reactome" id="R-HSA-5578749">
    <property type="pathway name" value="Transcriptional regulation by small RNAs"/>
</dbReference>
<dbReference type="Reactome" id="R-HSA-5619107">
    <property type="pathway name" value="Defective TPR may confer susceptibility towards thyroid papillary carcinoma (TPC)"/>
</dbReference>
<dbReference type="Reactome" id="R-HSA-6784531">
    <property type="pathway name" value="tRNA processing in the nucleus"/>
</dbReference>
<dbReference type="Reactome" id="R-HSA-9609690">
    <property type="pathway name" value="HCMV Early Events"/>
</dbReference>
<dbReference type="Reactome" id="R-HSA-9610379">
    <property type="pathway name" value="HCMV Late Events"/>
</dbReference>
<dbReference type="Reactome" id="R-HSA-9705671">
    <property type="pathway name" value="SARS-CoV-2 activates/modulates innate and adaptive immune responses"/>
</dbReference>
<dbReference type="SignaLink" id="O15504"/>
<dbReference type="SIGNOR" id="O15504"/>
<dbReference type="BioGRID-ORCS" id="11097">
    <property type="hits" value="70 hits in 1159 CRISPR screens"/>
</dbReference>
<dbReference type="ChiTaRS" id="NUPL2">
    <property type="organism name" value="human"/>
</dbReference>
<dbReference type="GeneWiki" id="NUPL2"/>
<dbReference type="GenomeRNAi" id="11097"/>
<dbReference type="Pharos" id="O15504">
    <property type="development level" value="Tbio"/>
</dbReference>
<dbReference type="PRO" id="PR:O15504"/>
<dbReference type="Proteomes" id="UP000005640">
    <property type="component" value="Chromosome 7"/>
</dbReference>
<dbReference type="RNAct" id="O15504">
    <property type="molecule type" value="protein"/>
</dbReference>
<dbReference type="Bgee" id="ENSG00000136243">
    <property type="expression patterns" value="Expressed in cerebellar hemisphere and 188 other cell types or tissues"/>
</dbReference>
<dbReference type="ExpressionAtlas" id="O15504">
    <property type="expression patterns" value="baseline and differential"/>
</dbReference>
<dbReference type="GO" id="GO:0005829">
    <property type="term" value="C:cytosol"/>
    <property type="evidence" value="ECO:0000314"/>
    <property type="project" value="HPA"/>
</dbReference>
<dbReference type="GO" id="GO:0005635">
    <property type="term" value="C:nuclear envelope"/>
    <property type="evidence" value="ECO:0000314"/>
    <property type="project" value="ComplexPortal"/>
</dbReference>
<dbReference type="GO" id="GO:0031965">
    <property type="term" value="C:nuclear membrane"/>
    <property type="evidence" value="ECO:0000314"/>
    <property type="project" value="HPA"/>
</dbReference>
<dbReference type="GO" id="GO:0005643">
    <property type="term" value="C:nuclear pore"/>
    <property type="evidence" value="ECO:0000303"/>
    <property type="project" value="ComplexPortal"/>
</dbReference>
<dbReference type="GO" id="GO:0005654">
    <property type="term" value="C:nucleoplasm"/>
    <property type="evidence" value="ECO:0000314"/>
    <property type="project" value="HPA"/>
</dbReference>
<dbReference type="GO" id="GO:0005634">
    <property type="term" value="C:nucleus"/>
    <property type="evidence" value="ECO:0000314"/>
    <property type="project" value="GO_Central"/>
</dbReference>
<dbReference type="GO" id="GO:0005049">
    <property type="term" value="F:nuclear export signal receptor activity"/>
    <property type="evidence" value="ECO:0000314"/>
    <property type="project" value="GO_Central"/>
</dbReference>
<dbReference type="GO" id="GO:0003723">
    <property type="term" value="F:RNA binding"/>
    <property type="evidence" value="ECO:0007005"/>
    <property type="project" value="UniProtKB"/>
</dbReference>
<dbReference type="GO" id="GO:0008270">
    <property type="term" value="F:zinc ion binding"/>
    <property type="evidence" value="ECO:0007669"/>
    <property type="project" value="UniProtKB-KW"/>
</dbReference>
<dbReference type="GO" id="GO:0051028">
    <property type="term" value="P:mRNA transport"/>
    <property type="evidence" value="ECO:0007669"/>
    <property type="project" value="UniProtKB-KW"/>
</dbReference>
<dbReference type="GO" id="GO:0006913">
    <property type="term" value="P:nucleocytoplasmic transport"/>
    <property type="evidence" value="ECO:0000303"/>
    <property type="project" value="ComplexPortal"/>
</dbReference>
<dbReference type="GO" id="GO:0006611">
    <property type="term" value="P:protein export from nucleus"/>
    <property type="evidence" value="ECO:0000316"/>
    <property type="project" value="GO_Central"/>
</dbReference>
<dbReference type="InterPro" id="IPR051767">
    <property type="entry name" value="Nucleoporin_NUP42"/>
</dbReference>
<dbReference type="InterPro" id="IPR041367">
    <property type="entry name" value="Znf-CCCH_4"/>
</dbReference>
<dbReference type="InterPro" id="IPR000571">
    <property type="entry name" value="Znf_CCCH"/>
</dbReference>
<dbReference type="PANTHER" id="PTHR46527:SF1">
    <property type="entry name" value="NUCLEOPORIN NUP42"/>
    <property type="match status" value="1"/>
</dbReference>
<dbReference type="PANTHER" id="PTHR46527">
    <property type="entry name" value="NUCLEOPORIN-LIKE PROTEIN 2"/>
    <property type="match status" value="1"/>
</dbReference>
<dbReference type="Pfam" id="PF18044">
    <property type="entry name" value="zf-CCCH_4"/>
    <property type="match status" value="1"/>
</dbReference>
<dbReference type="SMART" id="SM00356">
    <property type="entry name" value="ZnF_C3H1"/>
    <property type="match status" value="1"/>
</dbReference>
<dbReference type="PROSITE" id="PS50103">
    <property type="entry name" value="ZF_C3H1"/>
    <property type="match status" value="1"/>
</dbReference>
<comment type="function">
    <text evidence="6 8">Required for the export of mRNAs containing poly(A) tails from the nucleus into the cytoplasm.</text>
</comment>
<comment type="function">
    <text evidence="7">(Microbial infection) In case of infection by HIV-1, it may participate in the docking of viral Vpr at the nuclear envelope.</text>
</comment>
<comment type="subunit">
    <text evidence="4 5 8">Probable component of the nuclear pore complex (NPC). Interacts with nuclear export protein NXF1 (PubMed:10228171). Interacts with GLE1. Able to form a heterotrimer with NUP155 and GLE1 in vitro (PubMed:16000379). Interacts with XPO1 (PubMed:10358091).</text>
</comment>
<comment type="subunit">
    <text evidence="5 7">(Microbial infection) Interacts with the HIV-1 virus proteins Rev and Vpr. The interaction with HIV-1 Rev, a protein that mediates nuclear export of unspliced viral RNAs, suggests that its function may be bypassed by the HIV-1 virus.</text>
</comment>
<comment type="interaction">
    <interactant intactId="EBI-14488689">
        <id>O15504-2</id>
    </interactant>
    <interactant intactId="EBI-1047093">
        <id>O76011</id>
        <label>KRT34</label>
    </interactant>
    <organismsDiffer>false</organismsDiffer>
    <experiments>3</experiments>
</comment>
<comment type="subcellular location">
    <subcellularLocation>
        <location evidence="7 8">Nucleus</location>
        <location evidence="7 8">Nuclear pore complex</location>
    </subcellularLocation>
    <subcellularLocation>
        <location evidence="7 8">Nucleus membrane</location>
        <topology>Peripheral membrane protein</topology>
        <orientation evidence="7">Cytoplasmic side</orientation>
    </subcellularLocation>
    <text evidence="5">Excluded from the nucleolus.</text>
</comment>
<comment type="alternative products">
    <event type="alternative splicing"/>
    <isoform>
        <id>O15504-1</id>
        <name>1</name>
        <sequence type="displayed"/>
    </isoform>
    <isoform>
        <id>O15504-2</id>
        <name>2</name>
        <sequence type="described" ref="VSP_016481 VSP_016482"/>
    </isoform>
    <isoform>
        <id>O15504-3</id>
        <name>3</name>
        <sequence type="described" ref="VSP_016480"/>
    </isoform>
</comment>
<comment type="tissue specificity">
    <text evidence="5">Ubiquitously expressed.</text>
</comment>
<comment type="domain">
    <text evidence="1">The FG repeats are interaction sites for karyopherins (importins, exportins) and form probably an affinity gradient, guiding the transport proteins unidirectionally with their cargo through the NPC.</text>
</comment>
<comment type="PTM">
    <text evidence="5">O-glycosylated.</text>
</comment>
<keyword id="KW-0002">3D-structure</keyword>
<keyword id="KW-0025">Alternative splicing</keyword>
<keyword id="KW-0325">Glycoprotein</keyword>
<keyword id="KW-0472">Membrane</keyword>
<keyword id="KW-0479">Metal-binding</keyword>
<keyword id="KW-0509">mRNA transport</keyword>
<keyword id="KW-0906">Nuclear pore complex</keyword>
<keyword id="KW-0539">Nucleus</keyword>
<keyword id="KW-0597">Phosphoprotein</keyword>
<keyword id="KW-0653">Protein transport</keyword>
<keyword id="KW-1267">Proteomics identification</keyword>
<keyword id="KW-1185">Reference proteome</keyword>
<keyword id="KW-0677">Repeat</keyword>
<keyword id="KW-0811">Translocation</keyword>
<keyword id="KW-0813">Transport</keyword>
<keyword id="KW-0862">Zinc</keyword>
<keyword id="KW-0863">Zinc-finger</keyword>
<sequence length="423" mass="44872">MAICQFFLQGRCRFGDRCWNEHPGARGAGGGRQQPQQQPSGNNRRGWNTTSQRYSNVIQPSSFSKSTPWGGSRDQEKPYFSSFDSGASTNRKEGFGLSENPFASLSPDEQKDEKKLLEGIVKDMEVWESSGQWMFSVYSPVKKKPNISGFTDISPEELRLEYHNFLTSNNLQSYLNSVQRLINQWRNRVNELKSLNISTKVALLSDVKDGVNQAAPAFGFGSSQAATFMSPGFPVNNSSSDNAQNFSFKTNSGFAAASSGSPAGFGSSPAFGAAASTSSGISTSAPAFGFGKPEVTSAASFSFKSPAASSFGSPGFSGLPASLATGPVRAPVAPAFGGGSSVAGFGSPGSHSHTAFSKPSSDTFGNSSISTSLSASSSIIATDNVLFTPRDKLTVEELEQFQSKKFTLGKIPLKPPPLELLNV</sequence>
<evidence type="ECO:0000250" key="1"/>
<evidence type="ECO:0000255" key="2">
    <source>
        <dbReference type="PROSITE-ProRule" id="PRU00723"/>
    </source>
</evidence>
<evidence type="ECO:0000256" key="3">
    <source>
        <dbReference type="SAM" id="MobiDB-lite"/>
    </source>
</evidence>
<evidence type="ECO:0000269" key="4">
    <source>
    </source>
</evidence>
<evidence type="ECO:0000269" key="5">
    <source>
    </source>
</evidence>
<evidence type="ECO:0000269" key="6">
    <source>
    </source>
</evidence>
<evidence type="ECO:0000269" key="7">
    <source>
    </source>
</evidence>
<evidence type="ECO:0000269" key="8">
    <source>
    </source>
</evidence>
<evidence type="ECO:0000303" key="9">
    <source>
    </source>
</evidence>
<evidence type="ECO:0000303" key="10">
    <source>
    </source>
</evidence>
<evidence type="ECO:0000303" key="11">
    <source ref="2"/>
</evidence>
<evidence type="ECO:0000305" key="12"/>
<evidence type="ECO:0000312" key="13">
    <source>
        <dbReference type="HGNC" id="HGNC:17010"/>
    </source>
</evidence>
<evidence type="ECO:0007744" key="14">
    <source>
    </source>
</evidence>
<evidence type="ECO:0007744" key="15">
    <source>
    </source>
</evidence>
<evidence type="ECO:0007829" key="16">
    <source>
        <dbReference type="PDB" id="6B4F"/>
    </source>
</evidence>